<name>ISN1_ASPFU</name>
<accession>Q4W9B9</accession>
<dbReference type="EC" id="3.1.3.99" evidence="2"/>
<dbReference type="EMBL" id="AAHF01000017">
    <property type="protein sequence ID" value="EAL84322.1"/>
    <property type="molecule type" value="Genomic_DNA"/>
</dbReference>
<dbReference type="RefSeq" id="XP_746360.1">
    <property type="nucleotide sequence ID" value="XM_741267.1"/>
</dbReference>
<dbReference type="SMR" id="Q4W9B9"/>
<dbReference type="FunCoup" id="Q4W9B9">
    <property type="interactions" value="94"/>
</dbReference>
<dbReference type="STRING" id="330879.Q4W9B9"/>
<dbReference type="EnsemblFungi" id="EAL84322">
    <property type="protein sequence ID" value="EAL84322"/>
    <property type="gene ID" value="AFUA_4G00970"/>
</dbReference>
<dbReference type="GeneID" id="3503710"/>
<dbReference type="KEGG" id="afm:AFUA_4G00970"/>
<dbReference type="VEuPathDB" id="FungiDB:Afu4g00970"/>
<dbReference type="eggNOG" id="ENOG502QR24">
    <property type="taxonomic scope" value="Eukaryota"/>
</dbReference>
<dbReference type="HOGENOM" id="CLU_031816_1_0_1"/>
<dbReference type="InParanoid" id="Q4W9B9"/>
<dbReference type="OMA" id="WGVLACQ"/>
<dbReference type="OrthoDB" id="185373at2759"/>
<dbReference type="Proteomes" id="UP000002530">
    <property type="component" value="Chromosome 4"/>
</dbReference>
<dbReference type="GO" id="GO:0005524">
    <property type="term" value="F:ATP binding"/>
    <property type="evidence" value="ECO:0007669"/>
    <property type="project" value="UniProtKB-KW"/>
</dbReference>
<dbReference type="GO" id="GO:0050483">
    <property type="term" value="F:IMP 5'-nucleotidase activity"/>
    <property type="evidence" value="ECO:0000318"/>
    <property type="project" value="GO_Central"/>
</dbReference>
<dbReference type="GO" id="GO:0000287">
    <property type="term" value="F:magnesium ion binding"/>
    <property type="evidence" value="ECO:0007669"/>
    <property type="project" value="InterPro"/>
</dbReference>
<dbReference type="GO" id="GO:0006190">
    <property type="term" value="P:inosine salvage"/>
    <property type="evidence" value="ECO:0000318"/>
    <property type="project" value="GO_Central"/>
</dbReference>
<dbReference type="GO" id="GO:0071590">
    <property type="term" value="P:nicotinamide riboside biosynthetic process"/>
    <property type="evidence" value="ECO:0000318"/>
    <property type="project" value="GO_Central"/>
</dbReference>
<dbReference type="GO" id="GO:0071592">
    <property type="term" value="P:nicotinic acid riboside biosynthetic process"/>
    <property type="evidence" value="ECO:0000318"/>
    <property type="project" value="GO_Central"/>
</dbReference>
<dbReference type="GO" id="GO:0009117">
    <property type="term" value="P:nucleotide metabolic process"/>
    <property type="evidence" value="ECO:0007669"/>
    <property type="project" value="UniProtKB-KW"/>
</dbReference>
<dbReference type="InterPro" id="IPR036412">
    <property type="entry name" value="HAD-like_sf"/>
</dbReference>
<dbReference type="InterPro" id="IPR009453">
    <property type="entry name" value="ISN1"/>
</dbReference>
<dbReference type="PANTHER" id="PTHR28213">
    <property type="entry name" value="IMP-SPECIFIC 5'-NUCLEOTIDASE 1"/>
    <property type="match status" value="1"/>
</dbReference>
<dbReference type="PANTHER" id="PTHR28213:SF1">
    <property type="entry name" value="IMP-SPECIFIC 5'-NUCLEOTIDASE 1"/>
    <property type="match status" value="1"/>
</dbReference>
<dbReference type="Pfam" id="PF06437">
    <property type="entry name" value="ISN1"/>
    <property type="match status" value="1"/>
</dbReference>
<dbReference type="PIRSF" id="PIRSF028836">
    <property type="entry name" value="ISN1"/>
    <property type="match status" value="1"/>
</dbReference>
<dbReference type="SUPFAM" id="SSF56784">
    <property type="entry name" value="HAD-like"/>
    <property type="match status" value="1"/>
</dbReference>
<organism>
    <name type="scientific">Aspergillus fumigatus (strain ATCC MYA-4609 / CBS 101355 / FGSC A1100 / Af293)</name>
    <name type="common">Neosartorya fumigata</name>
    <dbReference type="NCBI Taxonomy" id="330879"/>
    <lineage>
        <taxon>Eukaryota</taxon>
        <taxon>Fungi</taxon>
        <taxon>Dikarya</taxon>
        <taxon>Ascomycota</taxon>
        <taxon>Pezizomycotina</taxon>
        <taxon>Eurotiomycetes</taxon>
        <taxon>Eurotiomycetidae</taxon>
        <taxon>Eurotiales</taxon>
        <taxon>Aspergillaceae</taxon>
        <taxon>Aspergillus</taxon>
        <taxon>Aspergillus subgen. Fumigati</taxon>
    </lineage>
</organism>
<reference key="1">
    <citation type="journal article" date="2005" name="Nature">
        <title>Genomic sequence of the pathogenic and allergenic filamentous fungus Aspergillus fumigatus.</title>
        <authorList>
            <person name="Nierman W.C."/>
            <person name="Pain A."/>
            <person name="Anderson M.J."/>
            <person name="Wortman J.R."/>
            <person name="Kim H.S."/>
            <person name="Arroyo J."/>
            <person name="Berriman M."/>
            <person name="Abe K."/>
            <person name="Archer D.B."/>
            <person name="Bermejo C."/>
            <person name="Bennett J.W."/>
            <person name="Bowyer P."/>
            <person name="Chen D."/>
            <person name="Collins M."/>
            <person name="Coulsen R."/>
            <person name="Davies R."/>
            <person name="Dyer P.S."/>
            <person name="Farman M.L."/>
            <person name="Fedorova N."/>
            <person name="Fedorova N.D."/>
            <person name="Feldblyum T.V."/>
            <person name="Fischer R."/>
            <person name="Fosker N."/>
            <person name="Fraser A."/>
            <person name="Garcia J.L."/>
            <person name="Garcia M.J."/>
            <person name="Goble A."/>
            <person name="Goldman G.H."/>
            <person name="Gomi K."/>
            <person name="Griffith-Jones S."/>
            <person name="Gwilliam R."/>
            <person name="Haas B.J."/>
            <person name="Haas H."/>
            <person name="Harris D.E."/>
            <person name="Horiuchi H."/>
            <person name="Huang J."/>
            <person name="Humphray S."/>
            <person name="Jimenez J."/>
            <person name="Keller N."/>
            <person name="Khouri H."/>
            <person name="Kitamoto K."/>
            <person name="Kobayashi T."/>
            <person name="Konzack S."/>
            <person name="Kulkarni R."/>
            <person name="Kumagai T."/>
            <person name="Lafton A."/>
            <person name="Latge J.-P."/>
            <person name="Li W."/>
            <person name="Lord A."/>
            <person name="Lu C."/>
            <person name="Majoros W.H."/>
            <person name="May G.S."/>
            <person name="Miller B.L."/>
            <person name="Mohamoud Y."/>
            <person name="Molina M."/>
            <person name="Monod M."/>
            <person name="Mouyna I."/>
            <person name="Mulligan S."/>
            <person name="Murphy L.D."/>
            <person name="O'Neil S."/>
            <person name="Paulsen I."/>
            <person name="Penalva M.A."/>
            <person name="Pertea M."/>
            <person name="Price C."/>
            <person name="Pritchard B.L."/>
            <person name="Quail M.A."/>
            <person name="Rabbinowitsch E."/>
            <person name="Rawlins N."/>
            <person name="Rajandream M.A."/>
            <person name="Reichard U."/>
            <person name="Renauld H."/>
            <person name="Robson G.D."/>
            <person name="Rodriguez de Cordoba S."/>
            <person name="Rodriguez-Pena J.M."/>
            <person name="Ronning C.M."/>
            <person name="Rutter S."/>
            <person name="Salzberg S.L."/>
            <person name="Sanchez M."/>
            <person name="Sanchez-Ferrero J.C."/>
            <person name="Saunders D."/>
            <person name="Seeger K."/>
            <person name="Squares R."/>
            <person name="Squares S."/>
            <person name="Takeuchi M."/>
            <person name="Tekaia F."/>
            <person name="Turner G."/>
            <person name="Vazquez de Aldana C.R."/>
            <person name="Weidman J."/>
            <person name="White O."/>
            <person name="Woodward J.R."/>
            <person name="Yu J.-H."/>
            <person name="Fraser C.M."/>
            <person name="Galagan J.E."/>
            <person name="Asai K."/>
            <person name="Machida M."/>
            <person name="Hall N."/>
            <person name="Barrell B.G."/>
            <person name="Denning D.W."/>
        </authorList>
    </citation>
    <scope>NUCLEOTIDE SEQUENCE [LARGE SCALE GENOMIC DNA]</scope>
    <source>
        <strain>ATCC MYA-4609 / CBS 101355 / FGSC A1100 / Af293</strain>
    </source>
</reference>
<evidence type="ECO:0000250" key="1">
    <source>
        <dbReference type="UniProtKB" id="A0A144A134"/>
    </source>
</evidence>
<evidence type="ECO:0000250" key="2">
    <source>
        <dbReference type="UniProtKB" id="Q99312"/>
    </source>
</evidence>
<evidence type="ECO:0000305" key="3"/>
<feature type="chain" id="PRO_0000084247" description="IMP-specific 5'-nucleotidase 1">
    <location>
        <begin position="1"/>
        <end position="450"/>
    </location>
</feature>
<feature type="active site" description="Nucleophile" evidence="1">
    <location>
        <position position="184"/>
    </location>
</feature>
<feature type="active site" description="Proton donor" evidence="1">
    <location>
        <position position="186"/>
    </location>
</feature>
<feature type="binding site" evidence="1">
    <location>
        <position position="144"/>
    </location>
    <ligand>
        <name>ATP</name>
        <dbReference type="ChEBI" id="CHEBI:30616"/>
        <note>allosteric activator</note>
    </ligand>
</feature>
<feature type="binding site" evidence="1">
    <location>
        <position position="184"/>
    </location>
    <ligand>
        <name>IMP</name>
        <dbReference type="ChEBI" id="CHEBI:58053"/>
    </ligand>
</feature>
<feature type="binding site" evidence="1">
    <location>
        <position position="184"/>
    </location>
    <ligand>
        <name>Mg(2+)</name>
        <dbReference type="ChEBI" id="CHEBI:18420"/>
    </ligand>
</feature>
<feature type="binding site" evidence="1">
    <location>
        <position position="186"/>
    </location>
    <ligand>
        <name>IMP</name>
        <dbReference type="ChEBI" id="CHEBI:58053"/>
    </ligand>
</feature>
<feature type="binding site" evidence="1">
    <location>
        <position position="186"/>
    </location>
    <ligand>
        <name>Mg(2+)</name>
        <dbReference type="ChEBI" id="CHEBI:18420"/>
    </ligand>
</feature>
<feature type="binding site" evidence="1">
    <location>
        <position position="192"/>
    </location>
    <ligand>
        <name>IMP</name>
        <dbReference type="ChEBI" id="CHEBI:58053"/>
    </ligand>
</feature>
<feature type="binding site" evidence="1">
    <location>
        <position position="220"/>
    </location>
    <ligand>
        <name>IMP</name>
        <dbReference type="ChEBI" id="CHEBI:58053"/>
    </ligand>
</feature>
<feature type="binding site" evidence="1">
    <location>
        <position position="373"/>
    </location>
    <ligand>
        <name>IMP</name>
        <dbReference type="ChEBI" id="CHEBI:58053"/>
    </ligand>
</feature>
<feature type="binding site" evidence="1">
    <location>
        <position position="381"/>
    </location>
    <ligand>
        <name>IMP</name>
        <dbReference type="ChEBI" id="CHEBI:58053"/>
    </ligand>
</feature>
<feature type="binding site" evidence="1">
    <location>
        <position position="405"/>
    </location>
    <ligand>
        <name>Mg(2+)</name>
        <dbReference type="ChEBI" id="CHEBI:18420"/>
    </ligand>
</feature>
<gene>
    <name type="primary">isn1</name>
    <name type="ORF">AFUA_4G00970</name>
</gene>
<keyword id="KW-0067">ATP-binding</keyword>
<keyword id="KW-0378">Hydrolase</keyword>
<keyword id="KW-0460">Magnesium</keyword>
<keyword id="KW-0479">Metal-binding</keyword>
<keyword id="KW-0546">Nucleotide metabolism</keyword>
<keyword id="KW-0547">Nucleotide-binding</keyword>
<keyword id="KW-1185">Reference proteome</keyword>
<protein>
    <recommendedName>
        <fullName>IMP-specific 5'-nucleotidase 1</fullName>
        <ecNumber evidence="2">3.1.3.99</ecNumber>
    </recommendedName>
</protein>
<comment type="function">
    <text evidence="2">IMP-specific 5'-nucleotidase involved in IMP (inositol monophosphate) degradation.</text>
</comment>
<comment type="catalytic activity">
    <reaction evidence="2">
        <text>IMP + H2O = inosine + phosphate</text>
        <dbReference type="Rhea" id="RHEA:27718"/>
        <dbReference type="ChEBI" id="CHEBI:15377"/>
        <dbReference type="ChEBI" id="CHEBI:17596"/>
        <dbReference type="ChEBI" id="CHEBI:43474"/>
        <dbReference type="ChEBI" id="CHEBI:58053"/>
        <dbReference type="EC" id="3.1.3.99"/>
    </reaction>
</comment>
<comment type="cofactor">
    <cofactor evidence="2">
        <name>Mg(2+)</name>
        <dbReference type="ChEBI" id="CHEBI:18420"/>
    </cofactor>
</comment>
<comment type="activity regulation">
    <text evidence="1 2">Allosterically activated by ATP (By similarity). ATP binding is a prerequisite to magnesium and substrate binding. ATP binds to 2 of the subunits in the homotetramer inducing a closure of these 2 subunits and the release of the C-terminal loop, thereby activating the enzyme (By similarity).</text>
</comment>
<comment type="subunit">
    <text evidence="2">Homotetramer.</text>
</comment>
<comment type="similarity">
    <text evidence="3">Belongs to the ISN1 family.</text>
</comment>
<sequence length="450" mass="50135">MTTRYRVEFASSRPTGKFFTARLNGQTNIFQIEWIKGLLAVPFVLHSQPTAVYQEHSENLVAVAADTHQRYAEIFRDVEKLIDDHSRPLAPPPPPVLASHLTLSVDHERNAAPGKSKLKLLVPTAGSFFSRLPLEDAFKYQDAKRMISRRRFVAPSFNDIRLTLNTAQLLGLVRGPGLDLVTFDGDVTLYDDGACLTPDNPAIPRIIRLLHQGVRIGIVTAAGYTEGAKYYERLKGLLDAVHDSSSLTPAQKDGLVVMGGESNFLFRFDSASPHRLSYVPRPEWLLDEMKSWNQEDITQLLDIAESSLRACAANLNLPVAVLRKDRAVGVYPYDRSKIHREQLEETVLVVQNTVERSVVGSRLPFCAFNGGNDVFVDIGDKSWGVRACQRYFGGIEPSRTLHVGDQFLSAGANDFKARLASTTAWIASLTETVQLLDELEEMQKAEKNRS</sequence>
<proteinExistence type="inferred from homology"/>